<protein>
    <recommendedName>
        <fullName evidence="7">Mu-conotoxin GVIIJ</fullName>
    </recommendedName>
    <alternativeName>
        <fullName evidence="7">Conotoxin muO-GVIIJ</fullName>
    </alternativeName>
    <alternativeName>
        <fullName evidence="7">MuO'section sign'-GVIIJ</fullName>
    </alternativeName>
</protein>
<keyword id="KW-0002">3D-structure</keyword>
<keyword id="KW-0102">Bromination</keyword>
<keyword id="KW-0903">Direct protein sequencing</keyword>
<keyword id="KW-1015">Disulfide bond</keyword>
<keyword id="KW-0379">Hydroxylation</keyword>
<keyword id="KW-0872">Ion channel impairing toxin</keyword>
<keyword id="KW-0960">Knottin</keyword>
<keyword id="KW-0528">Neurotoxin</keyword>
<keyword id="KW-0964">Secreted</keyword>
<keyword id="KW-0732">Signal</keyword>
<keyword id="KW-0800">Toxin</keyword>
<keyword id="KW-0738">Voltage-gated sodium channel impairing toxin</keyword>
<feature type="signal peptide" evidence="1">
    <location>
        <begin position="1"/>
        <end position="22"/>
    </location>
</feature>
<feature type="propeptide" id="PRO_0000438880" evidence="2">
    <location>
        <begin position="23"/>
        <end position="47"/>
    </location>
</feature>
<feature type="chain" id="PRO_5004957961" description="Mu-conotoxin GVIIJ" evidence="2">
    <location>
        <begin position="48"/>
        <end position="82"/>
    </location>
</feature>
<feature type="binding site" description="covalent" evidence="2">
    <location>
        <position position="71"/>
    </location>
    <ligand>
        <name>a protein</name>
        <dbReference type="ChEBI" id="CHEBI:16541"/>
    </ligand>
    <ligandPart>
        <name>L-cysteine residue</name>
        <dbReference type="ChEBI" id="CHEBI:29950"/>
    </ligandPart>
</feature>
<feature type="site" description="Functionally important residue, that binds to the site 8 of the channel" evidence="10">
    <location>
        <position position="59"/>
    </location>
</feature>
<feature type="site" description="Functionally important residue, that binds to the site 8 of the channel" evidence="10">
    <location>
        <position position="61"/>
    </location>
</feature>
<feature type="site" description="Functionally important residue, that binds to the site 8 of the channel" evidence="10">
    <location>
        <position position="63"/>
    </location>
</feature>
<feature type="site" description="Functionally important residue, that binds to the site 8 of the channel (distinct surface that K-59; R-61 and Y-63)" evidence="10">
    <location>
        <position position="71"/>
    </location>
</feature>
<feature type="modified residue" description="6'-bromotryptophan" evidence="2">
    <location>
        <position position="49"/>
    </location>
</feature>
<feature type="modified residue" description="4-hydroxyproline" evidence="2">
    <location>
        <position position="53"/>
    </location>
</feature>
<feature type="disulfide bond" evidence="2 6 11">
    <location>
        <begin position="50"/>
        <end position="65"/>
    </location>
</feature>
<feature type="disulfide bond" evidence="2 6 11">
    <location>
        <begin position="57"/>
        <end position="69"/>
    </location>
</feature>
<feature type="disulfide bond" evidence="2 6 11">
    <location>
        <begin position="64"/>
        <end position="76"/>
    </location>
</feature>
<feature type="mutagenesis site" description="10-fold decrease of affinity to Nav1.2/SCN2A." evidence="6">
    <original>W</original>
    <variation>A</variation>
    <location>
        <position position="49"/>
    </location>
</feature>
<feature type="mutagenesis site" description="No change in affinity to Nav1.2/SCN2A." evidence="6">
    <original>D</original>
    <variation>K</variation>
    <location>
        <position position="52"/>
    </location>
</feature>
<feature type="mutagenesis site" description="No change in affinity to Nav1.2/SCN2A." evidence="6">
    <original>P</original>
    <variation>A</variation>
    <location>
        <position position="53"/>
    </location>
</feature>
<feature type="mutagenesis site" description="No change in affinity to Nav1.2/SCN2A." evidence="6">
    <original>T</original>
    <variation>A</variation>
    <location>
        <position position="56"/>
    </location>
</feature>
<feature type="mutagenesis site" description="280-fold decrease of affinity to Nav1.2/SCN2A." evidence="6">
    <original>K</original>
    <variation>D</variation>
    <location>
        <position position="59"/>
    </location>
</feature>
<feature type="mutagenesis site" description="Small decrease in affinity to Nav1.2/SCN2A." evidence="6">
    <original>L</original>
    <variation>A</variation>
    <location>
        <position position="60"/>
    </location>
</feature>
<feature type="mutagenesis site" description="133-fold decrease of affinity to Nav1.2/SCN2A." evidence="6">
    <original>R</original>
    <variation>D</variation>
    <location>
        <position position="61"/>
    </location>
</feature>
<feature type="mutagenesis site" description="No change in affinity to Nav1.2/SCN2A." evidence="6">
    <original>L</original>
    <variation>A</variation>
    <location>
        <position position="62"/>
    </location>
</feature>
<feature type="mutagenesis site" description="53-fold decrease of affinity to Nav1.2/SCN2A." evidence="6">
    <original>Y</original>
    <variation>A</variation>
    <location>
        <position position="63"/>
    </location>
</feature>
<feature type="mutagenesis site" description="Small decrease in affinity to Nav1.2/SCN2A." evidence="6">
    <original>S</original>
    <variation>A</variation>
    <location>
        <position position="66"/>
    </location>
</feature>
<feature type="mutagenesis site" description="No change in affinity to Nav1.2/SCN2A." evidence="6">
    <original>F</original>
    <variation>A</variation>
    <location>
        <position position="68"/>
    </location>
</feature>
<feature type="mutagenesis site" description="No change in affinity to Nav1.2/SCN2A." evidence="6">
    <original>D</original>
    <variation>N</variation>
    <location>
        <position position="70"/>
    </location>
</feature>
<feature type="mutagenesis site" description="No change or small decrease in affinity to Nav1.2/SCN2A." evidence="6">
    <original>Y</original>
    <variation>A</variation>
    <variation>D</variation>
    <variation>R</variation>
    <location>
        <position position="72"/>
    </location>
</feature>
<feature type="mutagenesis site" description="No change in affinity to Nav1.2/SCN2A." evidence="6">
    <original>T</original>
    <variation>A</variation>
    <location>
        <position position="73"/>
    </location>
</feature>
<feature type="mutagenesis site" description="13-fold decrease of affinity to Nav1.2/SCN2A." evidence="6">
    <original>K</original>
    <variation>D</variation>
    <location>
        <position position="74"/>
    </location>
</feature>
<feature type="mutagenesis site" description="No change in affinity to Nav1.2/SCN2A." evidence="6">
    <original>K</original>
    <variation>G</variation>
    <variation>F</variation>
    <location>
        <position position="74"/>
    </location>
</feature>
<feature type="mutagenesis site" description="Small decrease in affinity to Nav1.2/SCN2A." evidence="6">
    <original>T</original>
    <variation>A</variation>
    <location>
        <position position="75"/>
    </location>
</feature>
<feature type="mutagenesis site" description="No change in affinity to Nav1.2/SCN2A." evidence="6">
    <original>K</original>
    <variation>A</variation>
    <location>
        <position position="77"/>
    </location>
</feature>
<feature type="mutagenesis site" description="No change in affinity to Nav1.2/SCN2A." evidence="6">
    <original>D</original>
    <variation>K</variation>
    <location>
        <position position="78"/>
    </location>
</feature>
<feature type="mutagenesis site" description="Small decrease in affinity to Nav1.2/SCN2A." evidence="6">
    <original>K</original>
    <variation>D</variation>
    <location>
        <position position="79"/>
    </location>
</feature>
<feature type="strand" evidence="12">
    <location>
        <begin position="58"/>
        <end position="61"/>
    </location>
</feature>
<feature type="strand" evidence="12">
    <location>
        <begin position="64"/>
        <end position="67"/>
    </location>
</feature>
<feature type="turn" evidence="12">
    <location>
        <begin position="71"/>
        <end position="74"/>
    </location>
</feature>
<dbReference type="EMBL" id="AB910851">
    <property type="protein sequence ID" value="BAO65619.1"/>
    <property type="status" value="ALT_SEQ"/>
    <property type="molecule type" value="mRNA"/>
</dbReference>
<dbReference type="PDB" id="2N8H">
    <property type="method" value="NMR"/>
    <property type="chains" value="A=48-82"/>
</dbReference>
<dbReference type="PDBsum" id="2N8H"/>
<dbReference type="BMRB" id="X5IWS1"/>
<dbReference type="SMR" id="X5IWS1"/>
<dbReference type="TCDB" id="8.B.4.1.9">
    <property type="family name" value="the conotoxin t (conotoxin t) family"/>
</dbReference>
<dbReference type="GO" id="GO:0005576">
    <property type="term" value="C:extracellular region"/>
    <property type="evidence" value="ECO:0007669"/>
    <property type="project" value="UniProtKB-SubCell"/>
</dbReference>
<dbReference type="GO" id="GO:0008200">
    <property type="term" value="F:ion channel inhibitor activity"/>
    <property type="evidence" value="ECO:0007669"/>
    <property type="project" value="InterPro"/>
</dbReference>
<dbReference type="GO" id="GO:0017080">
    <property type="term" value="F:sodium channel regulator activity"/>
    <property type="evidence" value="ECO:0007669"/>
    <property type="project" value="UniProtKB-KW"/>
</dbReference>
<dbReference type="GO" id="GO:0090729">
    <property type="term" value="F:toxin activity"/>
    <property type="evidence" value="ECO:0007669"/>
    <property type="project" value="UniProtKB-KW"/>
</dbReference>
<dbReference type="InterPro" id="IPR004214">
    <property type="entry name" value="Conotoxin"/>
</dbReference>
<dbReference type="Pfam" id="PF02950">
    <property type="entry name" value="Conotoxin"/>
    <property type="match status" value="1"/>
</dbReference>
<accession>X5IWS1</accession>
<sequence length="82" mass="8871">MKLTCVVIVAALLLTACQLITALDCGGTQKHRALRSTIKLSLLRQHRGWCGDPGATCGKLRLYCCSGFCDCYTKTCKDKSSA</sequence>
<reference key="1">
    <citation type="journal article" date="2014" name="Nat. Commun.">
        <title>Evolution of separate predation- and defence-evoked venoms in carnivorous cone snails.</title>
        <authorList>
            <person name="Dutertre S."/>
            <person name="Jin A.-H."/>
            <person name="Vetter I."/>
            <person name="Hamilton B."/>
            <person name="Sunagar K."/>
            <person name="Lavergne V."/>
            <person name="Dutertre V."/>
            <person name="Fry B.G."/>
            <person name="Antunes A."/>
            <person name="Venter D.J."/>
            <person name="Alewood P.F."/>
            <person name="Lewis R.J."/>
        </authorList>
    </citation>
    <scope>NUCLEOTIDE SEQUENCE [MRNA] OF 1-75</scope>
    <scope>PROTEIN SEQUENCE OF 48-59 AND 65-74</scope>
    <scope>MASS SPECTROMETRY</scope>
    <scope>SUBCELLULAR LOCATION</scope>
    <source>
        <tissue>Venom</tissue>
        <tissue>Venom duct</tissue>
    </source>
</reference>
<reference key="2">
    <citation type="journal article" date="2014" name="Proc. Natl. Acad. Sci. U.S.A.">
        <title>A disulfide tether stabilizes the block of sodium channels by the conotoxin muO[section sign]-GVIIJ.</title>
        <authorList>
            <person name="Gajewiak J."/>
            <person name="Azam L."/>
            <person name="Imperial J."/>
            <person name="Walewska A."/>
            <person name="Green B.R."/>
            <person name="Bandyopadhyay P.K."/>
            <person name="Raghuraman S."/>
            <person name="Ueberheide B."/>
            <person name="Bern M."/>
            <person name="Zhou H.M."/>
            <person name="Minassian N.A."/>
            <person name="Hagan R.H."/>
            <person name="Flinspach M."/>
            <person name="Liu Y."/>
            <person name="Bulaj G."/>
            <person name="Wickenden A.D."/>
            <person name="Olivera B.M."/>
            <person name="Yoshikami D."/>
            <person name="Zhang M.M."/>
        </authorList>
    </citation>
    <scope>NUCLEOTIDE SEQUENCE [MRNA]</scope>
    <scope>PROTEIN SEQUENCE OF 48-82</scope>
    <scope>FUNCTION</scope>
    <scope>SYNTHESIS OF 48-82</scope>
    <scope>DISULFIDE BOND</scope>
    <scope>BROMINATION AT TRP-49</scope>
    <scope>HYDROXYLATION AT PRO-53</scope>
    <scope>S-CYSTEINYLATION AT CYS-71</scope>
    <scope>MASS SPECTROMETRY</scope>
    <source>
        <tissue>Venom</tissue>
        <tissue>Venom duct</tissue>
    </source>
</reference>
<reference key="3">
    <citation type="journal article" date="2015" name="Biochemistry">
        <title>Probing the redox states of sodium channel cysteines at the binding site of muO[section sign]-conotoxin GVIIJ.</title>
        <authorList>
            <person name="Zhang M.M."/>
            <person name="Gajewiak J."/>
            <person name="Azam L."/>
            <person name="Bulaj G."/>
            <person name="Olivera B.M."/>
            <person name="Yoshikami D."/>
        </authorList>
    </citation>
    <scope>SYNTHESIS OF 48-82 (WITHOUT BROMINATION)</scope>
</reference>
<reference key="4">
    <citation type="journal article" date="2015" name="J. Neurophysiol.">
        <title>Alpha- and beta-subunit composition of voltage-gated sodium channels investigated with mu-conotoxins and the recently discovered muO'section sign'-conotoxin GVIIJ.</title>
        <authorList>
            <person name="Wilson M.J."/>
            <person name="Zhang M.M."/>
            <person name="Gajewiak J."/>
            <person name="Azam L."/>
            <person name="Rivier J.E."/>
            <person name="Olivera B.M."/>
            <person name="Yoshikami D."/>
        </authorList>
    </citation>
    <scope>FUNCTION</scope>
    <scope>SYNTHESIS OF 48-82</scope>
</reference>
<reference key="5">
    <citation type="journal article" date="2016" name="J. Biol. Chem.">
        <title>Structural basis for the inhibition of voltage-gated sodium channels by conotoxin muO-GVIIJ.</title>
        <authorList>
            <person name="Green B.R."/>
            <person name="Gajewiak J."/>
            <person name="Chhabra S."/>
            <person name="Skalicky J.J."/>
            <person name="Zhang M."/>
            <person name="Rivier J.E."/>
            <person name="Bulaj G."/>
            <person name="Olivera B.M."/>
            <person name="Yoshikami D."/>
            <person name="Norton R.S."/>
        </authorList>
    </citation>
    <scope>STRUCTURE BY NMR OF 48-82 OF MUTANT CYS-71</scope>
    <scope>SYNTHESIS OF 48-82 (WITHOUT BROMINATION)</scope>
    <scope>FUNCTION</scope>
    <scope>DISULFIDE BONDS</scope>
    <scope>MUTAGENESIS OF TRP-49; TRP-49; ASP-52; PRO-53; THR-56; LYS-59; LEU-60; ARG-61; LEU-62; TYR-63; SER-66; PHE-68; ASP-70; TYR-72; THR-73; LYS-74; THR-75; LYS-77; ASP-78 AND LYS-79</scope>
</reference>
<evidence type="ECO:0000255" key="1"/>
<evidence type="ECO:0000269" key="2">
    <source>
    </source>
</evidence>
<evidence type="ECO:0000269" key="3">
    <source>
    </source>
</evidence>
<evidence type="ECO:0000269" key="4">
    <source>
    </source>
</evidence>
<evidence type="ECO:0000269" key="5">
    <source>
    </source>
</evidence>
<evidence type="ECO:0000269" key="6">
    <source>
    </source>
</evidence>
<evidence type="ECO:0000303" key="7">
    <source>
    </source>
</evidence>
<evidence type="ECO:0000305" key="8"/>
<evidence type="ECO:0000305" key="9">
    <source>
    </source>
</evidence>
<evidence type="ECO:0000305" key="10">
    <source>
    </source>
</evidence>
<evidence type="ECO:0007744" key="11">
    <source>
        <dbReference type="PDB" id="2N8H"/>
    </source>
</evidence>
<evidence type="ECO:0007829" key="12">
    <source>
        <dbReference type="PDB" id="2N8H"/>
    </source>
</evidence>
<organism>
    <name type="scientific">Conus geographus</name>
    <name type="common">Geography cone</name>
    <name type="synonym">Nubecula geographus</name>
    <dbReference type="NCBI Taxonomy" id="6491"/>
    <lineage>
        <taxon>Eukaryota</taxon>
        <taxon>Metazoa</taxon>
        <taxon>Spiralia</taxon>
        <taxon>Lophotrochozoa</taxon>
        <taxon>Mollusca</taxon>
        <taxon>Gastropoda</taxon>
        <taxon>Caenogastropoda</taxon>
        <taxon>Neogastropoda</taxon>
        <taxon>Conoidea</taxon>
        <taxon>Conidae</taxon>
        <taxon>Conus</taxon>
        <taxon>Gastridium</taxon>
    </lineage>
</organism>
<proteinExistence type="evidence at protein level"/>
<name>O17J_CONGE</name>
<comment type="function">
    <text evidence="2 4 5 6">Mu-conotoxins block voltage-gated sodium channels (Nav). This toxin (GVIIJ(SSG)) blocks Nav1.1/SCN1A (Kd=11 nM), Nav1.2/SCN2A (Kd=11 nM), Nav1.3/SCN3A (Kd=15 nM), Nav1.4/SCN4A (Kd=4.7 nM), Nav1.6/SCN8A (Kd=360 nM) and Nav1.7/SCN9A (Kd=41 nM) (PubMed:24497506, PubMed:26039939). It binds the channel at the newly described site 8, which is composed by two surfaces whose one contains a non-disulfide-bonded cysteine (which is free to covalently bind the toxin Cys-71) (PubMed:24497506). It is noteworthy that coexpression of subunits beta-2 or beta-4 (but not beta-1 or beta-3) protects rNav1.1-1.7 against block by the toxin, since these subunits (thanks to their extracellular domain) covalently bind to the key cysteine of the channel, thus preventing the covalent binding of the toxin (PubMed:24497506, PubMed:25632083).</text>
</comment>
<comment type="subcellular location">
    <subcellularLocation>
        <location evidence="3">Secreted</location>
    </subcellularLocation>
</comment>
<comment type="tissue specificity">
    <text evidence="9">Expressed by the venom duct.</text>
</comment>
<comment type="domain">
    <text evidence="6">The presence of a 'disulfide through disulfide knot' structurally defines this protein as a knottin.</text>
</comment>
<comment type="domain">
    <text evidence="8">The cysteine framework is VI/VII (C-C-CC-C-C).</text>
</comment>
<comment type="PTM">
    <text evidence="2 6">Cys-71 is a key residue that tethers to the channel by covalent attachment, leading to nearly irreversible inhibition (k(off) very low) (PubMed:24497506, PubMed:26817840). In order to determine the solution structure without dimerization, this residue was mutated to Cys.</text>
</comment>
<comment type="mass spectrometry" mass="3934.49" method="MALDI" evidence="2"/>
<comment type="miscellaneous">
    <text evidence="2">Negative results: shows a very low affinity to Nav1.5/SCN5A (Kd=207 uM) and does not show activity on rNav1.8/SCN10A.</text>
</comment>
<comment type="similarity">
    <text evidence="8">Belongs to the conotoxin O1 superfamily.</text>
</comment>
<comment type="sequence caution" evidence="8">
    <conflict type="erroneous termination">
        <sequence resource="EMBL-CDS" id="BAO65619"/>
    </conflict>
    <text>Truncated C-terminus.</text>
</comment>